<protein>
    <recommendedName>
        <fullName evidence="1">UPF0303 protein ACP_1015</fullName>
    </recommendedName>
</protein>
<reference key="1">
    <citation type="journal article" date="2009" name="Appl. Environ. Microbiol.">
        <title>Three genomes from the phylum Acidobacteria provide insight into the lifestyles of these microorganisms in soils.</title>
        <authorList>
            <person name="Ward N.L."/>
            <person name="Challacombe J.F."/>
            <person name="Janssen P.H."/>
            <person name="Henrissat B."/>
            <person name="Coutinho P.M."/>
            <person name="Wu M."/>
            <person name="Xie G."/>
            <person name="Haft D.H."/>
            <person name="Sait M."/>
            <person name="Badger J."/>
            <person name="Barabote R.D."/>
            <person name="Bradley B."/>
            <person name="Brettin T.S."/>
            <person name="Brinkac L.M."/>
            <person name="Bruce D."/>
            <person name="Creasy T."/>
            <person name="Daugherty S.C."/>
            <person name="Davidsen T.M."/>
            <person name="DeBoy R.T."/>
            <person name="Detter J.C."/>
            <person name="Dodson R.J."/>
            <person name="Durkin A.S."/>
            <person name="Ganapathy A."/>
            <person name="Gwinn-Giglio M."/>
            <person name="Han C.S."/>
            <person name="Khouri H."/>
            <person name="Kiss H."/>
            <person name="Kothari S.P."/>
            <person name="Madupu R."/>
            <person name="Nelson K.E."/>
            <person name="Nelson W.C."/>
            <person name="Paulsen I."/>
            <person name="Penn K."/>
            <person name="Ren Q."/>
            <person name="Rosovitz M.J."/>
            <person name="Selengut J.D."/>
            <person name="Shrivastava S."/>
            <person name="Sullivan S.A."/>
            <person name="Tapia R."/>
            <person name="Thompson L.S."/>
            <person name="Watkins K.L."/>
            <person name="Yang Q."/>
            <person name="Yu C."/>
            <person name="Zafar N."/>
            <person name="Zhou L."/>
            <person name="Kuske C.R."/>
        </authorList>
    </citation>
    <scope>NUCLEOTIDE SEQUENCE [LARGE SCALE GENOMIC DNA]</scope>
    <source>
        <strain>ATCC 51196 / DSM 11244 / BCRC 80197 / JCM 7670 / NBRC 15755 / NCIMB 13165 / 161</strain>
    </source>
</reference>
<sequence>MSLAEDIALVARQESALVFEHFDENTAWQLGSRLRQMAVERGYPLVIDVRRFGQVLFTAALPGAVPDQAEWVRRKTNVVARFHRSSYAIGLELAEKQSSLEEKQGLPTVDFATHGGCFPIRVKSAGIIGCVTVSGLPQRADHELVVEAICALTGLDYATYKLPQA</sequence>
<name>Y1015_ACIC5</name>
<evidence type="ECO:0000255" key="1">
    <source>
        <dbReference type="HAMAP-Rule" id="MF_00761"/>
    </source>
</evidence>
<gene>
    <name type="ordered locus">ACP_1015</name>
</gene>
<accession>C1F3M3</accession>
<comment type="similarity">
    <text evidence="1">Belongs to the UPF0303 family.</text>
</comment>
<keyword id="KW-1185">Reference proteome</keyword>
<proteinExistence type="inferred from homology"/>
<organism>
    <name type="scientific">Acidobacterium capsulatum (strain ATCC 51196 / DSM 11244 / BCRC 80197 / JCM 7670 / NBRC 15755 / NCIMB 13165 / 161)</name>
    <dbReference type="NCBI Taxonomy" id="240015"/>
    <lineage>
        <taxon>Bacteria</taxon>
        <taxon>Pseudomonadati</taxon>
        <taxon>Acidobacteriota</taxon>
        <taxon>Terriglobia</taxon>
        <taxon>Terriglobales</taxon>
        <taxon>Acidobacteriaceae</taxon>
        <taxon>Acidobacterium</taxon>
    </lineage>
</organism>
<feature type="chain" id="PRO_1000148410" description="UPF0303 protein ACP_1015">
    <location>
        <begin position="1"/>
        <end position="165"/>
    </location>
</feature>
<dbReference type="EMBL" id="CP001472">
    <property type="protein sequence ID" value="ACO34386.1"/>
    <property type="molecule type" value="Genomic_DNA"/>
</dbReference>
<dbReference type="RefSeq" id="WP_015896174.1">
    <property type="nucleotide sequence ID" value="NC_012483.1"/>
</dbReference>
<dbReference type="SMR" id="C1F3M3"/>
<dbReference type="STRING" id="240015.ACP_1015"/>
<dbReference type="KEGG" id="aca:ACP_1015"/>
<dbReference type="eggNOG" id="COG4702">
    <property type="taxonomic scope" value="Bacteria"/>
</dbReference>
<dbReference type="HOGENOM" id="CLU_101036_2_1_0"/>
<dbReference type="InParanoid" id="C1F3M3"/>
<dbReference type="OrthoDB" id="9815315at2"/>
<dbReference type="Proteomes" id="UP000002207">
    <property type="component" value="Chromosome"/>
</dbReference>
<dbReference type="Gene3D" id="3.30.450.150">
    <property type="entry name" value="Haem-degrading domain"/>
    <property type="match status" value="1"/>
</dbReference>
<dbReference type="HAMAP" id="MF_00761">
    <property type="entry name" value="UPF0303"/>
    <property type="match status" value="1"/>
</dbReference>
<dbReference type="InterPro" id="IPR005624">
    <property type="entry name" value="PduO/GlcC-like"/>
</dbReference>
<dbReference type="InterPro" id="IPR038084">
    <property type="entry name" value="PduO/GlcC-like_sf"/>
</dbReference>
<dbReference type="InterPro" id="IPR010371">
    <property type="entry name" value="YBR137W-like"/>
</dbReference>
<dbReference type="NCBIfam" id="NF002696">
    <property type="entry name" value="PRK02487.1-5"/>
    <property type="match status" value="1"/>
</dbReference>
<dbReference type="PANTHER" id="PTHR28255">
    <property type="match status" value="1"/>
</dbReference>
<dbReference type="PANTHER" id="PTHR28255:SF1">
    <property type="entry name" value="UPF0303 PROTEIN YBR137W"/>
    <property type="match status" value="1"/>
</dbReference>
<dbReference type="Pfam" id="PF03928">
    <property type="entry name" value="HbpS-like"/>
    <property type="match status" value="1"/>
</dbReference>
<dbReference type="PIRSF" id="PIRSF008757">
    <property type="entry name" value="UCP008757"/>
    <property type="match status" value="1"/>
</dbReference>
<dbReference type="SUPFAM" id="SSF143744">
    <property type="entry name" value="GlcG-like"/>
    <property type="match status" value="1"/>
</dbReference>